<keyword id="KW-0002">3D-structure</keyword>
<keyword id="KW-0007">Acetylation</keyword>
<keyword id="KW-0067">ATP-binding</keyword>
<keyword id="KW-0547">Nucleotide-binding</keyword>
<keyword id="KW-0597">Phosphoprotein</keyword>
<keyword id="KW-1267">Proteomics identification</keyword>
<keyword id="KW-1185">Reference proteome</keyword>
<keyword id="KW-0808">Transferase</keyword>
<keyword id="KW-0832">Ubl conjugation</keyword>
<keyword id="KW-0833">Ubl conjugation pathway</keyword>
<name>UB2E2_HUMAN</name>
<feature type="initiator methionine" description="Removed" evidence="11">
    <location>
        <position position="1"/>
    </location>
</feature>
<feature type="chain" id="PRO_0000082472" description="Ubiquitin-conjugating enzyme E2 E2">
    <location>
        <begin position="2"/>
        <end position="201"/>
    </location>
</feature>
<feature type="domain" description="UBC core" evidence="1">
    <location>
        <begin position="55"/>
        <end position="201"/>
    </location>
</feature>
<feature type="region of interest" description="Disordered" evidence="3">
    <location>
        <begin position="1"/>
        <end position="55"/>
    </location>
</feature>
<feature type="compositionally biased region" description="Basic and acidic residues" evidence="3">
    <location>
        <begin position="1"/>
        <end position="10"/>
    </location>
</feature>
<feature type="compositionally biased region" description="Basic and acidic residues" evidence="3">
    <location>
        <begin position="21"/>
        <end position="45"/>
    </location>
</feature>
<feature type="compositionally biased region" description="Low complexity" evidence="3">
    <location>
        <begin position="46"/>
        <end position="55"/>
    </location>
</feature>
<feature type="active site" description="Glycyl thioester intermediate" evidence="1 2">
    <location>
        <position position="139"/>
    </location>
</feature>
<feature type="modified residue" description="N-acetylserine" evidence="11">
    <location>
        <position position="2"/>
    </location>
</feature>
<feature type="modified residue" description="Phosphoserine" evidence="13">
    <location>
        <position position="11"/>
    </location>
</feature>
<feature type="modified residue" description="Phosphoserine" evidence="13">
    <location>
        <position position="15"/>
    </location>
</feature>
<feature type="modified residue" description="Phosphoserine" evidence="13">
    <location>
        <position position="18"/>
    </location>
</feature>
<feature type="modified residue" description="Phosphoserine" evidence="12">
    <location>
        <position position="19"/>
    </location>
</feature>
<feature type="helix" evidence="14">
    <location>
        <begin position="55"/>
        <end position="69"/>
    </location>
</feature>
<feature type="strand" evidence="14">
    <location>
        <begin position="75"/>
        <end position="82"/>
    </location>
</feature>
<feature type="strand" evidence="14">
    <location>
        <begin position="86"/>
        <end position="92"/>
    </location>
</feature>
<feature type="turn" evidence="14">
    <location>
        <begin position="98"/>
        <end position="101"/>
    </location>
</feature>
<feature type="strand" evidence="14">
    <location>
        <begin position="103"/>
        <end position="109"/>
    </location>
</feature>
<feature type="turn" evidence="14">
    <location>
        <begin position="112"/>
        <end position="115"/>
    </location>
</feature>
<feature type="strand" evidence="14">
    <location>
        <begin position="120"/>
        <end position="125"/>
    </location>
</feature>
<feature type="helix" evidence="14">
    <location>
        <begin position="141"/>
        <end position="143"/>
    </location>
</feature>
<feature type="turn" evidence="14">
    <location>
        <begin position="144"/>
        <end position="146"/>
    </location>
</feature>
<feature type="helix" evidence="14">
    <location>
        <begin position="153"/>
        <end position="165"/>
    </location>
</feature>
<feature type="helix" evidence="14">
    <location>
        <begin position="175"/>
        <end position="183"/>
    </location>
</feature>
<feature type="helix" evidence="14">
    <location>
        <begin position="185"/>
        <end position="199"/>
    </location>
</feature>
<proteinExistence type="evidence at protein level"/>
<evidence type="ECO:0000255" key="1">
    <source>
        <dbReference type="PROSITE-ProRule" id="PRU00388"/>
    </source>
</evidence>
<evidence type="ECO:0000255" key="2">
    <source>
        <dbReference type="PROSITE-ProRule" id="PRU10133"/>
    </source>
</evidence>
<evidence type="ECO:0000256" key="3">
    <source>
        <dbReference type="SAM" id="MobiDB-lite"/>
    </source>
</evidence>
<evidence type="ECO:0000269" key="4">
    <source>
    </source>
</evidence>
<evidence type="ECO:0000269" key="5">
    <source>
    </source>
</evidence>
<evidence type="ECO:0000269" key="6">
    <source>
    </source>
</evidence>
<evidence type="ECO:0000269" key="7">
    <source>
    </source>
</evidence>
<evidence type="ECO:0000269" key="8">
    <source>
    </source>
</evidence>
<evidence type="ECO:0000312" key="9">
    <source>
        <dbReference type="HGNC" id="HGNC:12478"/>
    </source>
</evidence>
<evidence type="ECO:0007744" key="10">
    <source>
        <dbReference type="PDB" id="1Y6L"/>
    </source>
</evidence>
<evidence type="ECO:0007744" key="11">
    <source>
    </source>
</evidence>
<evidence type="ECO:0007744" key="12">
    <source>
    </source>
</evidence>
<evidence type="ECO:0007744" key="13">
    <source>
    </source>
</evidence>
<evidence type="ECO:0007829" key="14">
    <source>
        <dbReference type="PDB" id="1Y6L"/>
    </source>
</evidence>
<protein>
    <recommendedName>
        <fullName>Ubiquitin-conjugating enzyme E2 E2</fullName>
        <ecNumber evidence="4">2.3.2.23</ecNumber>
    </recommendedName>
    <alternativeName>
        <fullName>E2 ubiquitin-conjugating enzyme E2</fullName>
    </alternativeName>
    <alternativeName>
        <fullName>UbcH8</fullName>
    </alternativeName>
    <alternativeName>
        <fullName>Ubiquitin carrier protein E2</fullName>
    </alternativeName>
    <alternativeName>
        <fullName>Ubiquitin-protein ligase E2</fullName>
    </alternativeName>
</protein>
<sequence>MSTEAQRVDDSPSTSGGSSDGDQRESVQQEPEREQVQPKKKEGKISSKTAAKLSTSAKRIQKELAEITLDPPPNCSAGPKGDNIYEWRSTILGPPGSVYEGGVFFLDITFSPDYPFKPPKVTFRTRIYHCNINSQGVICLDILKDNWSPALTISKVLLSICSLLTDCNPADPLVGSIATQYMTNRAEHDRMARQWTKRYAT</sequence>
<accession>Q96LR5</accession>
<comment type="function">
    <text evidence="4 5 7 8">Accepts ubiquitin from the E1 complex and catalyzes its covalent attachment to other proteins. In vitro catalyzes 'Lys-11'- and 'Lys-48'-, as well as 'Lys-63'-linked polyubiquitination. Catalyzes the ISGylation of influenza A virus NS1 protein.</text>
</comment>
<comment type="catalytic activity">
    <reaction evidence="1 2 4">
        <text>S-ubiquitinyl-[E1 ubiquitin-activating enzyme]-L-cysteine + [E2 ubiquitin-conjugating enzyme]-L-cysteine = [E1 ubiquitin-activating enzyme]-L-cysteine + S-ubiquitinyl-[E2 ubiquitin-conjugating enzyme]-L-cysteine.</text>
        <dbReference type="EC" id="2.3.2.23"/>
    </reaction>
</comment>
<comment type="pathway">
    <text evidence="1">Protein modification; protein ubiquitination.</text>
</comment>
<comment type="interaction">
    <interactant intactId="EBI-2129763">
        <id>Q96LR5</id>
    </interactant>
    <interactant intactId="EBI-2875665">
        <id>Q96B67</id>
        <label>ARRDC3</label>
    </interactant>
    <organismsDiffer>false</organismsDiffer>
    <experiments>8</experiments>
</comment>
<comment type="interaction">
    <interactant intactId="EBI-2129763">
        <id>Q96LR5</id>
    </interactant>
    <interactant intactId="EBI-12344389">
        <id>Q96EP1-2</id>
        <label>CHFR</label>
    </interactant>
    <organismsDiffer>false</organismsDiffer>
    <experiments>3</experiments>
</comment>
<comment type="interaction">
    <interactant intactId="EBI-2129763">
        <id>Q96LR5</id>
    </interactant>
    <interactant intactId="EBI-5838167">
        <id>Q9NWM3</id>
        <label>CUEDC1</label>
    </interactant>
    <organismsDiffer>false</organismsDiffer>
    <experiments>3</experiments>
</comment>
<comment type="interaction">
    <interactant intactId="EBI-2129763">
        <id>Q96LR5</id>
    </interactant>
    <interactant intactId="EBI-724310">
        <id>Q15038</id>
        <label>DAZAP2</label>
    </interactant>
    <organismsDiffer>false</organismsDiffer>
    <experiments>3</experiments>
</comment>
<comment type="interaction">
    <interactant intactId="EBI-2129763">
        <id>Q96LR5</id>
    </interactant>
    <interactant intactId="EBI-948630">
        <id>Q86Y13</id>
        <label>DZIP3</label>
    </interactant>
    <organismsDiffer>false</organismsDiffer>
    <experiments>4</experiments>
</comment>
<comment type="interaction">
    <interactant intactId="EBI-2129763">
        <id>Q96LR5</id>
    </interactant>
    <interactant intactId="EBI-10175124">
        <id>Q8IZU0</id>
        <label>FAM9B</label>
    </interactant>
    <organismsDiffer>false</organismsDiffer>
    <experiments>3</experiments>
</comment>
<comment type="interaction">
    <interactant intactId="EBI-2129763">
        <id>Q96LR5</id>
    </interactant>
    <interactant intactId="EBI-2340316">
        <id>O15344</id>
        <label>MID1</label>
    </interactant>
    <organismsDiffer>false</organismsDiffer>
    <experiments>12</experiments>
</comment>
<comment type="interaction">
    <interactant intactId="EBI-2129763">
        <id>Q96LR5</id>
    </interactant>
    <interactant intactId="EBI-10172526">
        <id>Q9UJV3-2</id>
        <label>MID2</label>
    </interactant>
    <organismsDiffer>false</organismsDiffer>
    <experiments>6</experiments>
</comment>
<comment type="interaction">
    <interactant intactId="EBI-2129763">
        <id>Q96LR5</id>
    </interactant>
    <interactant intactId="EBI-1058491">
        <id>Q96FW1</id>
        <label>OTUB1</label>
    </interactant>
    <organismsDiffer>false</organismsDiffer>
    <experiments>10</experiments>
</comment>
<comment type="interaction">
    <interactant intactId="EBI-2129763">
        <id>Q96LR5</id>
    </interactant>
    <interactant intactId="EBI-12813581">
        <id>Q9NXJ5-2</id>
        <label>PGPEP1</label>
    </interactant>
    <organismsDiffer>false</organismsDiffer>
    <experiments>6</experiments>
</comment>
<comment type="interaction">
    <interactant intactId="EBI-2129763">
        <id>Q96LR5</id>
    </interactant>
    <interactant intactId="EBI-2129242">
        <id>Q9Y4L5</id>
        <label>RNF115</label>
    </interactant>
    <organismsDiffer>false</organismsDiffer>
    <experiments>6</experiments>
</comment>
<comment type="interaction">
    <interactant intactId="EBI-2129763">
        <id>Q96LR5</id>
    </interactant>
    <interactant intactId="EBI-2339208">
        <id>Q96EQ8</id>
        <label>RNF125</label>
    </interactant>
    <organismsDiffer>false</organismsDiffer>
    <experiments>5</experiments>
</comment>
<comment type="interaction">
    <interactant intactId="EBI-2129763">
        <id>Q96LR5</id>
    </interactant>
    <interactant intactId="EBI-2340249">
        <id>Q96GF1</id>
        <label>RNF185</label>
    </interactant>
    <organismsDiffer>false</organismsDiffer>
    <experiments>4</experiments>
</comment>
<comment type="interaction">
    <interactant intactId="EBI-2129763">
        <id>Q96LR5</id>
    </interactant>
    <interactant intactId="EBI-722416">
        <id>Q99496</id>
        <label>RNF2</label>
    </interactant>
    <organismsDiffer>false</organismsDiffer>
    <experiments>6</experiments>
</comment>
<comment type="interaction">
    <interactant intactId="EBI-2129763">
        <id>Q96LR5</id>
    </interactant>
    <interactant intactId="EBI-2129220">
        <id>Q96BH1</id>
        <label>RNF25</label>
    </interactant>
    <organismsDiffer>false</organismsDiffer>
    <experiments>4</experiments>
</comment>
<comment type="interaction">
    <interactant intactId="EBI-2129763">
        <id>Q96LR5</id>
    </interactant>
    <interactant intactId="EBI-348482">
        <id>Q99942</id>
        <label>RNF5</label>
    </interactant>
    <organismsDiffer>false</organismsDiffer>
    <experiments>10</experiments>
</comment>
<comment type="interaction">
    <interactant intactId="EBI-2129763">
        <id>Q96LR5</id>
    </interactant>
    <interactant intactId="EBI-2129889">
        <id>O75382</id>
        <label>TRIM3</label>
    </interactant>
    <organismsDiffer>false</organismsDiffer>
    <experiments>3</experiments>
</comment>
<comment type="interaction">
    <interactant intactId="EBI-2129763">
        <id>Q96LR5</id>
    </interactant>
    <interactant intactId="EBI-739510">
        <id>Q9HCM9</id>
        <label>TRIM39</label>
    </interactant>
    <organismsDiffer>false</organismsDiffer>
    <experiments>6</experiments>
</comment>
<comment type="interaction">
    <interactant intactId="EBI-2129763">
        <id>Q96LR5</id>
    </interactant>
    <interactant intactId="EBI-11523450">
        <id>Q9HCM9-2</id>
        <label>TRIM39</label>
    </interactant>
    <organismsDiffer>false</organismsDiffer>
    <experiments>8</experiments>
</comment>
<comment type="interaction">
    <interactant intactId="EBI-2129763">
        <id>Q96LR5</id>
    </interactant>
    <interactant intactId="EBI-9867283">
        <id>Q86XT4</id>
        <label>TRIM50</label>
    </interactant>
    <organismsDiffer>false</organismsDiffer>
    <experiments>6</experiments>
</comment>
<comment type="interaction">
    <interactant intactId="EBI-2129763">
        <id>Q96LR5</id>
    </interactant>
    <interactant intactId="EBI-743923">
        <id>O00308</id>
        <label>WWP2</label>
    </interactant>
    <organismsDiffer>false</organismsDiffer>
    <experiments>3</experiments>
</comment>
<comment type="interaction">
    <interactant intactId="EBI-2129763">
        <id>Q96LR5</id>
    </interactant>
    <interactant intactId="EBI-9316527">
        <id>Q99PZ6</id>
        <label>ospG</label>
    </interactant>
    <organismsDiffer>true</organismsDiffer>
    <experiments>2</experiments>
</comment>
<comment type="PTM">
    <text evidence="6">Autoubiquitinated in vitro.</text>
</comment>
<comment type="similarity">
    <text evidence="1">Belongs to the ubiquitin-conjugating enzyme family.</text>
</comment>
<reference key="1">
    <citation type="journal article" date="1997" name="Cytogenet. Cell Genet.">
        <title>cDNA cloning, characterization, and chromosome mapping of UBE2E2 encoding a human ubiquitin-conjugating E2 enzyme.</title>
        <authorList>
            <person name="Kimura M."/>
            <person name="Hattori T."/>
            <person name="Matsuda Y."/>
            <person name="Yoshioka T."/>
            <person name="Sumi N."/>
            <person name="Umeda Y."/>
            <person name="Nakashima S."/>
            <person name="Okano Y."/>
        </authorList>
    </citation>
    <scope>NUCLEOTIDE SEQUENCE [MRNA]</scope>
    <scope>FUNCTION</scope>
</reference>
<reference key="2">
    <citation type="journal article" date="2004" name="Nat. Genet.">
        <title>Complete sequencing and characterization of 21,243 full-length human cDNAs.</title>
        <authorList>
            <person name="Ota T."/>
            <person name="Suzuki Y."/>
            <person name="Nishikawa T."/>
            <person name="Otsuki T."/>
            <person name="Sugiyama T."/>
            <person name="Irie R."/>
            <person name="Wakamatsu A."/>
            <person name="Hayashi K."/>
            <person name="Sato H."/>
            <person name="Nagai K."/>
            <person name="Kimura K."/>
            <person name="Makita H."/>
            <person name="Sekine M."/>
            <person name="Obayashi M."/>
            <person name="Nishi T."/>
            <person name="Shibahara T."/>
            <person name="Tanaka T."/>
            <person name="Ishii S."/>
            <person name="Yamamoto J."/>
            <person name="Saito K."/>
            <person name="Kawai Y."/>
            <person name="Isono Y."/>
            <person name="Nakamura Y."/>
            <person name="Nagahari K."/>
            <person name="Murakami K."/>
            <person name="Yasuda T."/>
            <person name="Iwayanagi T."/>
            <person name="Wagatsuma M."/>
            <person name="Shiratori A."/>
            <person name="Sudo H."/>
            <person name="Hosoiri T."/>
            <person name="Kaku Y."/>
            <person name="Kodaira H."/>
            <person name="Kondo H."/>
            <person name="Sugawara M."/>
            <person name="Takahashi M."/>
            <person name="Kanda K."/>
            <person name="Yokoi T."/>
            <person name="Furuya T."/>
            <person name="Kikkawa E."/>
            <person name="Omura Y."/>
            <person name="Abe K."/>
            <person name="Kamihara K."/>
            <person name="Katsuta N."/>
            <person name="Sato K."/>
            <person name="Tanikawa M."/>
            <person name="Yamazaki M."/>
            <person name="Ninomiya K."/>
            <person name="Ishibashi T."/>
            <person name="Yamashita H."/>
            <person name="Murakawa K."/>
            <person name="Fujimori K."/>
            <person name="Tanai H."/>
            <person name="Kimata M."/>
            <person name="Watanabe M."/>
            <person name="Hiraoka S."/>
            <person name="Chiba Y."/>
            <person name="Ishida S."/>
            <person name="Ono Y."/>
            <person name="Takiguchi S."/>
            <person name="Watanabe S."/>
            <person name="Yosida M."/>
            <person name="Hotuta T."/>
            <person name="Kusano J."/>
            <person name="Kanehori K."/>
            <person name="Takahashi-Fujii A."/>
            <person name="Hara H."/>
            <person name="Tanase T.-O."/>
            <person name="Nomura Y."/>
            <person name="Togiya S."/>
            <person name="Komai F."/>
            <person name="Hara R."/>
            <person name="Takeuchi K."/>
            <person name="Arita M."/>
            <person name="Imose N."/>
            <person name="Musashino K."/>
            <person name="Yuuki H."/>
            <person name="Oshima A."/>
            <person name="Sasaki N."/>
            <person name="Aotsuka S."/>
            <person name="Yoshikawa Y."/>
            <person name="Matsunawa H."/>
            <person name="Ichihara T."/>
            <person name="Shiohata N."/>
            <person name="Sano S."/>
            <person name="Moriya S."/>
            <person name="Momiyama H."/>
            <person name="Satoh N."/>
            <person name="Takami S."/>
            <person name="Terashima Y."/>
            <person name="Suzuki O."/>
            <person name="Nakagawa S."/>
            <person name="Senoh A."/>
            <person name="Mizoguchi H."/>
            <person name="Goto Y."/>
            <person name="Shimizu F."/>
            <person name="Wakebe H."/>
            <person name="Hishigaki H."/>
            <person name="Watanabe T."/>
            <person name="Sugiyama A."/>
            <person name="Takemoto M."/>
            <person name="Kawakami B."/>
            <person name="Yamazaki M."/>
            <person name="Watanabe K."/>
            <person name="Kumagai A."/>
            <person name="Itakura S."/>
            <person name="Fukuzumi Y."/>
            <person name="Fujimori Y."/>
            <person name="Komiyama M."/>
            <person name="Tashiro H."/>
            <person name="Tanigami A."/>
            <person name="Fujiwara T."/>
            <person name="Ono T."/>
            <person name="Yamada K."/>
            <person name="Fujii Y."/>
            <person name="Ozaki K."/>
            <person name="Hirao M."/>
            <person name="Ohmori Y."/>
            <person name="Kawabata A."/>
            <person name="Hikiji T."/>
            <person name="Kobatake N."/>
            <person name="Inagaki H."/>
            <person name="Ikema Y."/>
            <person name="Okamoto S."/>
            <person name="Okitani R."/>
            <person name="Kawakami T."/>
            <person name="Noguchi S."/>
            <person name="Itoh T."/>
            <person name="Shigeta K."/>
            <person name="Senba T."/>
            <person name="Matsumura K."/>
            <person name="Nakajima Y."/>
            <person name="Mizuno T."/>
            <person name="Morinaga M."/>
            <person name="Sasaki M."/>
            <person name="Togashi T."/>
            <person name="Oyama M."/>
            <person name="Hata H."/>
            <person name="Watanabe M."/>
            <person name="Komatsu T."/>
            <person name="Mizushima-Sugano J."/>
            <person name="Satoh T."/>
            <person name="Shirai Y."/>
            <person name="Takahashi Y."/>
            <person name="Nakagawa K."/>
            <person name="Okumura K."/>
            <person name="Nagase T."/>
            <person name="Nomura N."/>
            <person name="Kikuchi H."/>
            <person name="Masuho Y."/>
            <person name="Yamashita R."/>
            <person name="Nakai K."/>
            <person name="Yada T."/>
            <person name="Nakamura Y."/>
            <person name="Ohara O."/>
            <person name="Isogai T."/>
            <person name="Sugano S."/>
        </authorList>
    </citation>
    <scope>NUCLEOTIDE SEQUENCE [LARGE SCALE MRNA]</scope>
    <source>
        <tissue>Brain</tissue>
    </source>
</reference>
<reference key="3">
    <citation type="journal article" date="2004" name="Genome Res.">
        <title>The status, quality, and expansion of the NIH full-length cDNA project: the Mammalian Gene Collection (MGC).</title>
        <authorList>
            <consortium name="The MGC Project Team"/>
        </authorList>
    </citation>
    <scope>NUCLEOTIDE SEQUENCE [LARGE SCALE MRNA]</scope>
    <source>
        <tissue>Prostate</tissue>
    </source>
</reference>
<reference key="4">
    <citation type="journal article" date="2009" name="Anal. Chem.">
        <title>Lys-N and trypsin cover complementary parts of the phosphoproteome in a refined SCX-based approach.</title>
        <authorList>
            <person name="Gauci S."/>
            <person name="Helbig A.O."/>
            <person name="Slijper M."/>
            <person name="Krijgsveld J."/>
            <person name="Heck A.J."/>
            <person name="Mohammed S."/>
        </authorList>
    </citation>
    <scope>ACETYLATION [LARGE SCALE ANALYSIS] AT SER-2</scope>
    <scope>CLEAVAGE OF INITIATOR METHIONINE [LARGE SCALE ANALYSIS]</scope>
    <scope>IDENTIFICATION BY MASS SPECTROMETRY [LARGE SCALE ANALYSIS]</scope>
</reference>
<reference key="5">
    <citation type="journal article" date="2009" name="Sci. Signal.">
        <title>Quantitative phosphoproteomic analysis of T cell receptor signaling reveals system-wide modulation of protein-protein interactions.</title>
        <authorList>
            <person name="Mayya V."/>
            <person name="Lundgren D.H."/>
            <person name="Hwang S.-I."/>
            <person name="Rezaul K."/>
            <person name="Wu L."/>
            <person name="Eng J.K."/>
            <person name="Rodionov V."/>
            <person name="Han D.K."/>
        </authorList>
    </citation>
    <scope>IDENTIFICATION BY MASS SPECTROMETRY [LARGE SCALE ANALYSIS]</scope>
    <source>
        <tissue>Leukemic T-cell</tissue>
    </source>
</reference>
<reference key="6">
    <citation type="journal article" date="2010" name="J. Biol. Chem.">
        <title>The E2 ubiquitin-conjugating enzymes direct polyubiquitination to preferred lysines.</title>
        <authorList>
            <person name="David Y."/>
            <person name="Ziv T."/>
            <person name="Admon A."/>
            <person name="Navon A."/>
        </authorList>
    </citation>
    <scope>FUNCTION</scope>
    <scope>CATALYTIC ACTIVITY</scope>
</reference>
<reference key="7">
    <citation type="journal article" date="2010" name="Proc. Natl. Acad. Sci. U.S.A.">
        <title>ISG15 conjugation system targets the viral NS1 protein in influenza A virus-infected cells.</title>
        <authorList>
            <person name="Zhao C."/>
            <person name="Hsiang T.Y."/>
            <person name="Kuo R.L."/>
            <person name="Krug R.M."/>
        </authorList>
    </citation>
    <scope>FUNCTION</scope>
</reference>
<reference key="8">
    <citation type="journal article" date="2011" name="BMC Syst. Biol.">
        <title>Initial characterization of the human central proteome.</title>
        <authorList>
            <person name="Burkard T.R."/>
            <person name="Planyavsky M."/>
            <person name="Kaupe I."/>
            <person name="Breitwieser F.P."/>
            <person name="Buerckstuemmer T."/>
            <person name="Bennett K.L."/>
            <person name="Superti-Furga G."/>
            <person name="Colinge J."/>
        </authorList>
    </citation>
    <scope>IDENTIFICATION BY MASS SPECTROMETRY [LARGE SCALE ANALYSIS]</scope>
</reference>
<reference key="9">
    <citation type="journal article" date="2011" name="Sci. Signal.">
        <title>System-wide temporal characterization of the proteome and phosphoproteome of human embryonic stem cell differentiation.</title>
        <authorList>
            <person name="Rigbolt K.T."/>
            <person name="Prokhorova T.A."/>
            <person name="Akimov V."/>
            <person name="Henningsen J."/>
            <person name="Johansen P.T."/>
            <person name="Kratchmarova I."/>
            <person name="Kassem M."/>
            <person name="Mann M."/>
            <person name="Olsen J.V."/>
            <person name="Blagoev B."/>
        </authorList>
    </citation>
    <scope>PHOSPHORYLATION [LARGE SCALE ANALYSIS] AT SER-19</scope>
    <scope>IDENTIFICATION BY MASS SPECTROMETRY [LARGE SCALE ANALYSIS]</scope>
</reference>
<reference key="10">
    <citation type="journal article" date="2013" name="J. Proteome Res.">
        <title>Toward a comprehensive characterization of a human cancer cell phosphoproteome.</title>
        <authorList>
            <person name="Zhou H."/>
            <person name="Di Palma S."/>
            <person name="Preisinger C."/>
            <person name="Peng M."/>
            <person name="Polat A.N."/>
            <person name="Heck A.J."/>
            <person name="Mohammed S."/>
        </authorList>
    </citation>
    <scope>IDENTIFICATION BY MASS SPECTROMETRY [LARGE SCALE ANALYSIS]</scope>
    <source>
        <tissue>Cervix carcinoma</tissue>
    </source>
</reference>
<reference key="11">
    <citation type="journal article" date="2014" name="J. Proteomics">
        <title>An enzyme assisted RP-RPLC approach for in-depth analysis of human liver phosphoproteome.</title>
        <authorList>
            <person name="Bian Y."/>
            <person name="Song C."/>
            <person name="Cheng K."/>
            <person name="Dong M."/>
            <person name="Wang F."/>
            <person name="Huang J."/>
            <person name="Sun D."/>
            <person name="Wang L."/>
            <person name="Ye M."/>
            <person name="Zou H."/>
        </authorList>
    </citation>
    <scope>PHOSPHORYLATION [LARGE SCALE ANALYSIS] AT SER-11; SER-15 AND SER-18</scope>
    <scope>IDENTIFICATION BY MASS SPECTROMETRY [LARGE SCALE ANALYSIS]</scope>
    <source>
        <tissue>Liver</tissue>
    </source>
</reference>
<reference evidence="10" key="12">
    <citation type="journal article" date="2012" name="Mol. Cell. Proteomics">
        <title>A human ubiquitin conjugating enzyme (E2)-HECT E3 ligase structure-function screen.</title>
        <authorList>
            <person name="Sheng Y."/>
            <person name="Hong J.H."/>
            <person name="Doherty R."/>
            <person name="Srikumar T."/>
            <person name="Shloush J."/>
            <person name="Avvakumov G.V."/>
            <person name="Walker J.R."/>
            <person name="Xue S."/>
            <person name="Neculai D."/>
            <person name="Wan J.W."/>
            <person name="Kim S.K."/>
            <person name="Arrowsmith C.H."/>
            <person name="Raught B."/>
            <person name="Dhe-Paganon S."/>
        </authorList>
    </citation>
    <scope>X-RAY CRYSTALLOGRAPHY (1.85 ANGSTROMS) OF 55-201</scope>
    <scope>AUTOUBIQUITINATION</scope>
</reference>
<reference key="13">
    <citation type="journal article" date="2016" name="Mol. Cell">
        <title>E3-Independent Constitutive Monoubiquitination Complements Histone Methyltransferase Activity of SETDB1.</title>
        <authorList>
            <person name="Sun L."/>
            <person name="Fang J."/>
        </authorList>
    </citation>
    <scope>FUNCTION</scope>
</reference>
<dbReference type="EC" id="2.3.2.23" evidence="4"/>
<dbReference type="EMBL" id="AK057886">
    <property type="protein sequence ID" value="BAB71605.1"/>
    <property type="molecule type" value="mRNA"/>
</dbReference>
<dbReference type="EMBL" id="BC022332">
    <property type="protein sequence ID" value="AAH22332.1"/>
    <property type="molecule type" value="mRNA"/>
</dbReference>
<dbReference type="CCDS" id="CCDS2637.1"/>
<dbReference type="RefSeq" id="NP_001357154.1">
    <property type="nucleotide sequence ID" value="NM_001370225.1"/>
</dbReference>
<dbReference type="RefSeq" id="NP_689866.1">
    <property type="nucleotide sequence ID" value="NM_152653.4"/>
</dbReference>
<dbReference type="RefSeq" id="XP_005265489.1">
    <property type="nucleotide sequence ID" value="XM_005265432.2"/>
</dbReference>
<dbReference type="PDB" id="1Y6L">
    <property type="method" value="X-ray"/>
    <property type="resolution" value="1.85 A"/>
    <property type="chains" value="A/B/C=55-201"/>
</dbReference>
<dbReference type="PDB" id="6W9A">
    <property type="method" value="X-ray"/>
    <property type="resolution" value="2.30 A"/>
    <property type="chains" value="A/C=30-201"/>
</dbReference>
<dbReference type="PDBsum" id="1Y6L"/>
<dbReference type="PDBsum" id="6W9A"/>
<dbReference type="EMDB" id="EMD-44638"/>
<dbReference type="SMR" id="Q96LR5"/>
<dbReference type="BioGRID" id="113173">
    <property type="interactions" value="97"/>
</dbReference>
<dbReference type="DIP" id="DIP-52704N"/>
<dbReference type="FunCoup" id="Q96LR5">
    <property type="interactions" value="1135"/>
</dbReference>
<dbReference type="IntAct" id="Q96LR5">
    <property type="interactions" value="55"/>
</dbReference>
<dbReference type="MINT" id="Q96LR5"/>
<dbReference type="STRING" id="9606.ENSP00000379931"/>
<dbReference type="MoonDB" id="Q96LR5">
    <property type="type" value="Predicted"/>
</dbReference>
<dbReference type="GlyGen" id="Q96LR5">
    <property type="glycosylation" value="2 sites, 1 O-linked glycan (1 site)"/>
</dbReference>
<dbReference type="iPTMnet" id="Q96LR5"/>
<dbReference type="PhosphoSitePlus" id="Q96LR5"/>
<dbReference type="SwissPalm" id="Q96LR5"/>
<dbReference type="BioMuta" id="UBE2E2"/>
<dbReference type="DMDM" id="47606201"/>
<dbReference type="jPOST" id="Q96LR5"/>
<dbReference type="MassIVE" id="Q96LR5"/>
<dbReference type="PaxDb" id="9606-ENSP00000379931"/>
<dbReference type="PeptideAtlas" id="Q96LR5"/>
<dbReference type="ProteomicsDB" id="77239"/>
<dbReference type="Pumba" id="Q96LR5"/>
<dbReference type="Antibodypedia" id="11339">
    <property type="antibodies" value="184 antibodies from 31 providers"/>
</dbReference>
<dbReference type="CPTC" id="Q96LR5">
    <property type="antibodies" value="3 antibodies"/>
</dbReference>
<dbReference type="DNASU" id="7325"/>
<dbReference type="Ensembl" id="ENST00000396703.6">
    <property type="protein sequence ID" value="ENSP00000379931.1"/>
    <property type="gene ID" value="ENSG00000182247.11"/>
</dbReference>
<dbReference type="Ensembl" id="ENST00000425792.5">
    <property type="protein sequence ID" value="ENSP00000401053.1"/>
    <property type="gene ID" value="ENSG00000182247.11"/>
</dbReference>
<dbReference type="GeneID" id="7325"/>
<dbReference type="KEGG" id="hsa:7325"/>
<dbReference type="MANE-Select" id="ENST00000396703.6">
    <property type="protein sequence ID" value="ENSP00000379931.1"/>
    <property type="RefSeq nucleotide sequence ID" value="NM_152653.4"/>
    <property type="RefSeq protein sequence ID" value="NP_689866.1"/>
</dbReference>
<dbReference type="UCSC" id="uc003ccg.3">
    <property type="organism name" value="human"/>
</dbReference>
<dbReference type="AGR" id="HGNC:12478"/>
<dbReference type="CTD" id="7325"/>
<dbReference type="DisGeNET" id="7325"/>
<dbReference type="GeneCards" id="UBE2E2"/>
<dbReference type="HGNC" id="HGNC:12478">
    <property type="gene designation" value="UBE2E2"/>
</dbReference>
<dbReference type="HPA" id="ENSG00000182247">
    <property type="expression patterns" value="Low tissue specificity"/>
</dbReference>
<dbReference type="MIM" id="602163">
    <property type="type" value="gene"/>
</dbReference>
<dbReference type="neXtProt" id="NX_Q96LR5"/>
<dbReference type="OpenTargets" id="ENSG00000182247"/>
<dbReference type="PharmGKB" id="PA37128"/>
<dbReference type="VEuPathDB" id="HostDB:ENSG00000182247"/>
<dbReference type="eggNOG" id="KOG0417">
    <property type="taxonomic scope" value="Eukaryota"/>
</dbReference>
<dbReference type="GeneTree" id="ENSGT00940000155985"/>
<dbReference type="HOGENOM" id="CLU_030988_14_4_1"/>
<dbReference type="InParanoid" id="Q96LR5"/>
<dbReference type="OMA" id="CDCSHES"/>
<dbReference type="OrthoDB" id="9480840at2759"/>
<dbReference type="PAN-GO" id="Q96LR5">
    <property type="GO annotations" value="7 GO annotations based on evolutionary models"/>
</dbReference>
<dbReference type="PhylomeDB" id="Q96LR5"/>
<dbReference type="TreeFam" id="TF101117"/>
<dbReference type="BRENDA" id="2.3.2.23">
    <property type="organism ID" value="2681"/>
</dbReference>
<dbReference type="BRENDA" id="2.3.2.24">
    <property type="organism ID" value="2681"/>
</dbReference>
<dbReference type="PathwayCommons" id="Q96LR5"/>
<dbReference type="Reactome" id="R-HSA-983168">
    <property type="pathway name" value="Antigen processing: Ubiquitination &amp; Proteasome degradation"/>
</dbReference>
<dbReference type="SignaLink" id="Q96LR5"/>
<dbReference type="SIGNOR" id="Q96LR5"/>
<dbReference type="UniPathway" id="UPA00143"/>
<dbReference type="BioGRID-ORCS" id="7325">
    <property type="hits" value="13 hits in 1151 CRISPR screens"/>
</dbReference>
<dbReference type="ChiTaRS" id="UBE2E2">
    <property type="organism name" value="human"/>
</dbReference>
<dbReference type="EvolutionaryTrace" id="Q96LR5"/>
<dbReference type="GeneWiki" id="UBE2E2"/>
<dbReference type="GenomeRNAi" id="7325"/>
<dbReference type="Pharos" id="Q96LR5">
    <property type="development level" value="Tbio"/>
</dbReference>
<dbReference type="PRO" id="PR:Q96LR5"/>
<dbReference type="Proteomes" id="UP000005640">
    <property type="component" value="Chromosome 3"/>
</dbReference>
<dbReference type="RNAct" id="Q96LR5">
    <property type="molecule type" value="protein"/>
</dbReference>
<dbReference type="Bgee" id="ENSG00000182247">
    <property type="expression patterns" value="Expressed in sural nerve and 183 other cell types or tissues"/>
</dbReference>
<dbReference type="ExpressionAtlas" id="Q96LR5">
    <property type="expression patterns" value="baseline and differential"/>
</dbReference>
<dbReference type="GO" id="GO:0005634">
    <property type="term" value="C:nucleus"/>
    <property type="evidence" value="ECO:0000318"/>
    <property type="project" value="GO_Central"/>
</dbReference>
<dbReference type="GO" id="GO:0005524">
    <property type="term" value="F:ATP binding"/>
    <property type="evidence" value="ECO:0007669"/>
    <property type="project" value="UniProtKB-KW"/>
</dbReference>
<dbReference type="GO" id="GO:0042296">
    <property type="term" value="F:ISG15 transferase activity"/>
    <property type="evidence" value="ECO:0000314"/>
    <property type="project" value="HGNC-UCL"/>
</dbReference>
<dbReference type="GO" id="GO:0061631">
    <property type="term" value="F:ubiquitin conjugating enzyme activity"/>
    <property type="evidence" value="ECO:0000314"/>
    <property type="project" value="MGI"/>
</dbReference>
<dbReference type="GO" id="GO:0004842">
    <property type="term" value="F:ubiquitin-protein transferase activity"/>
    <property type="evidence" value="ECO:0000314"/>
    <property type="project" value="UniProtKB"/>
</dbReference>
<dbReference type="GO" id="GO:0006974">
    <property type="term" value="P:DNA damage response"/>
    <property type="evidence" value="ECO:0000315"/>
    <property type="project" value="MGI"/>
</dbReference>
<dbReference type="GO" id="GO:0032020">
    <property type="term" value="P:ISG15-protein conjugation"/>
    <property type="evidence" value="ECO:0000314"/>
    <property type="project" value="HGNC-UCL"/>
</dbReference>
<dbReference type="GO" id="GO:1900087">
    <property type="term" value="P:positive regulation of G1/S transition of mitotic cell cycle"/>
    <property type="evidence" value="ECO:0000316"/>
    <property type="project" value="MGI"/>
</dbReference>
<dbReference type="GO" id="GO:0070979">
    <property type="term" value="P:protein K11-linked ubiquitination"/>
    <property type="evidence" value="ECO:0000314"/>
    <property type="project" value="UniProtKB"/>
</dbReference>
<dbReference type="GO" id="GO:0070936">
    <property type="term" value="P:protein K48-linked ubiquitination"/>
    <property type="evidence" value="ECO:0000314"/>
    <property type="project" value="UniProtKB"/>
</dbReference>
<dbReference type="GO" id="GO:0070534">
    <property type="term" value="P:protein K63-linked ubiquitination"/>
    <property type="evidence" value="ECO:0000314"/>
    <property type="project" value="UniProtKB"/>
</dbReference>
<dbReference type="GO" id="GO:0006513">
    <property type="term" value="P:protein monoubiquitination"/>
    <property type="evidence" value="ECO:0000314"/>
    <property type="project" value="UniProt"/>
</dbReference>
<dbReference type="CDD" id="cd23793">
    <property type="entry name" value="UBCc_UBE2E"/>
    <property type="match status" value="1"/>
</dbReference>
<dbReference type="FunFam" id="3.10.110.10:FF:000003">
    <property type="entry name" value="Ubiquitin-conjugating enzyme E2 E3"/>
    <property type="match status" value="1"/>
</dbReference>
<dbReference type="Gene3D" id="3.10.110.10">
    <property type="entry name" value="Ubiquitin Conjugating Enzyme"/>
    <property type="match status" value="1"/>
</dbReference>
<dbReference type="IDEAL" id="IID00640"/>
<dbReference type="InterPro" id="IPR000608">
    <property type="entry name" value="UBQ-conjugat_E2_core"/>
</dbReference>
<dbReference type="InterPro" id="IPR023313">
    <property type="entry name" value="UBQ-conjugating_AS"/>
</dbReference>
<dbReference type="InterPro" id="IPR016135">
    <property type="entry name" value="UBQ-conjugating_enzyme/RWD"/>
</dbReference>
<dbReference type="PANTHER" id="PTHR24068">
    <property type="entry name" value="UBIQUITIN-CONJUGATING ENZYME E2"/>
    <property type="match status" value="1"/>
</dbReference>
<dbReference type="Pfam" id="PF00179">
    <property type="entry name" value="UQ_con"/>
    <property type="match status" value="1"/>
</dbReference>
<dbReference type="SMART" id="SM00212">
    <property type="entry name" value="UBCc"/>
    <property type="match status" value="1"/>
</dbReference>
<dbReference type="SUPFAM" id="SSF54495">
    <property type="entry name" value="UBC-like"/>
    <property type="match status" value="1"/>
</dbReference>
<dbReference type="PROSITE" id="PS00183">
    <property type="entry name" value="UBC_1"/>
    <property type="match status" value="1"/>
</dbReference>
<dbReference type="PROSITE" id="PS50127">
    <property type="entry name" value="UBC_2"/>
    <property type="match status" value="1"/>
</dbReference>
<organism>
    <name type="scientific">Homo sapiens</name>
    <name type="common">Human</name>
    <dbReference type="NCBI Taxonomy" id="9606"/>
    <lineage>
        <taxon>Eukaryota</taxon>
        <taxon>Metazoa</taxon>
        <taxon>Chordata</taxon>
        <taxon>Craniata</taxon>
        <taxon>Vertebrata</taxon>
        <taxon>Euteleostomi</taxon>
        <taxon>Mammalia</taxon>
        <taxon>Eutheria</taxon>
        <taxon>Euarchontoglires</taxon>
        <taxon>Primates</taxon>
        <taxon>Haplorrhini</taxon>
        <taxon>Catarrhini</taxon>
        <taxon>Hominidae</taxon>
        <taxon>Homo</taxon>
    </lineage>
</organism>
<gene>
    <name evidence="9" type="primary">UBE2E2</name>
    <name type="synonym">UBCH8</name>
</gene>